<sequence length="92" mass="10233">MGRECEITGKRTMFGNNVPRKGLAKKKGGAGQHIGVKTKRTFKVNLINKKFFIPELGKNVSIKISASTLRSISKVGLNVFLKKNNKKIDDFI</sequence>
<protein>
    <recommendedName>
        <fullName evidence="1">Large ribosomal subunit protein bL28</fullName>
    </recommendedName>
    <alternativeName>
        <fullName evidence="2">50S ribosomal protein L28</fullName>
    </alternativeName>
</protein>
<comment type="similarity">
    <text evidence="1">Belongs to the bacterial ribosomal protein bL28 family.</text>
</comment>
<dbReference type="EMBL" id="CP000976">
    <property type="protein sequence ID" value="ACH93300.1"/>
    <property type="molecule type" value="Genomic_DNA"/>
</dbReference>
<dbReference type="RefSeq" id="WP_012538111.1">
    <property type="nucleotide sequence ID" value="NC_011229.1"/>
</dbReference>
<dbReference type="SMR" id="B5RLT4"/>
<dbReference type="STRING" id="412419.BDU_348"/>
<dbReference type="KEGG" id="bdu:BDU_348"/>
<dbReference type="eggNOG" id="COG0227">
    <property type="taxonomic scope" value="Bacteria"/>
</dbReference>
<dbReference type="HOGENOM" id="CLU_064548_3_2_12"/>
<dbReference type="OrthoDB" id="9805609at2"/>
<dbReference type="Proteomes" id="UP000000611">
    <property type="component" value="Chromosome"/>
</dbReference>
<dbReference type="GO" id="GO:1990904">
    <property type="term" value="C:ribonucleoprotein complex"/>
    <property type="evidence" value="ECO:0007669"/>
    <property type="project" value="UniProtKB-KW"/>
</dbReference>
<dbReference type="GO" id="GO:0005840">
    <property type="term" value="C:ribosome"/>
    <property type="evidence" value="ECO:0007669"/>
    <property type="project" value="UniProtKB-KW"/>
</dbReference>
<dbReference type="GO" id="GO:0003735">
    <property type="term" value="F:structural constituent of ribosome"/>
    <property type="evidence" value="ECO:0007669"/>
    <property type="project" value="InterPro"/>
</dbReference>
<dbReference type="GO" id="GO:0006412">
    <property type="term" value="P:translation"/>
    <property type="evidence" value="ECO:0007669"/>
    <property type="project" value="UniProtKB-UniRule"/>
</dbReference>
<dbReference type="Gene3D" id="2.30.170.40">
    <property type="entry name" value="Ribosomal protein L28/L24"/>
    <property type="match status" value="1"/>
</dbReference>
<dbReference type="HAMAP" id="MF_00373">
    <property type="entry name" value="Ribosomal_bL28"/>
    <property type="match status" value="1"/>
</dbReference>
<dbReference type="InterPro" id="IPR026569">
    <property type="entry name" value="Ribosomal_bL28"/>
</dbReference>
<dbReference type="InterPro" id="IPR034704">
    <property type="entry name" value="Ribosomal_bL28/bL31-like_sf"/>
</dbReference>
<dbReference type="InterPro" id="IPR001383">
    <property type="entry name" value="Ribosomal_bL28_bact-type"/>
</dbReference>
<dbReference type="InterPro" id="IPR037147">
    <property type="entry name" value="Ribosomal_bL28_sf"/>
</dbReference>
<dbReference type="NCBIfam" id="TIGR00009">
    <property type="entry name" value="L28"/>
    <property type="match status" value="1"/>
</dbReference>
<dbReference type="PANTHER" id="PTHR13528">
    <property type="entry name" value="39S RIBOSOMAL PROTEIN L28, MITOCHONDRIAL"/>
    <property type="match status" value="1"/>
</dbReference>
<dbReference type="PANTHER" id="PTHR13528:SF2">
    <property type="entry name" value="LARGE RIBOSOMAL SUBUNIT PROTEIN BL28M"/>
    <property type="match status" value="1"/>
</dbReference>
<dbReference type="Pfam" id="PF00830">
    <property type="entry name" value="Ribosomal_L28"/>
    <property type="match status" value="1"/>
</dbReference>
<dbReference type="SUPFAM" id="SSF143800">
    <property type="entry name" value="L28p-like"/>
    <property type="match status" value="1"/>
</dbReference>
<name>RL28_BORDL</name>
<organism>
    <name type="scientific">Borrelia duttonii (strain Ly)</name>
    <dbReference type="NCBI Taxonomy" id="412419"/>
    <lineage>
        <taxon>Bacteria</taxon>
        <taxon>Pseudomonadati</taxon>
        <taxon>Spirochaetota</taxon>
        <taxon>Spirochaetia</taxon>
        <taxon>Spirochaetales</taxon>
        <taxon>Borreliaceae</taxon>
        <taxon>Borrelia</taxon>
    </lineage>
</organism>
<accession>B5RLT4</accession>
<keyword id="KW-0687">Ribonucleoprotein</keyword>
<keyword id="KW-0689">Ribosomal protein</keyword>
<evidence type="ECO:0000255" key="1">
    <source>
        <dbReference type="HAMAP-Rule" id="MF_00373"/>
    </source>
</evidence>
<evidence type="ECO:0000305" key="2"/>
<gene>
    <name evidence="1" type="primary">rpmB</name>
    <name type="ordered locus">BDU_348</name>
</gene>
<reference key="1">
    <citation type="journal article" date="2008" name="PLoS Genet.">
        <title>The genome of Borrelia recurrentis, the agent of deadly louse-borne relapsing fever, is a degraded subset of tick-borne Borrelia duttonii.</title>
        <authorList>
            <person name="Lescot M."/>
            <person name="Audic S."/>
            <person name="Robert C."/>
            <person name="Nguyen T.T."/>
            <person name="Blanc G."/>
            <person name="Cutler S.J."/>
            <person name="Wincker P."/>
            <person name="Couloux A."/>
            <person name="Claverie J.-M."/>
            <person name="Raoult D."/>
            <person name="Drancourt M."/>
        </authorList>
    </citation>
    <scope>NUCLEOTIDE SEQUENCE [LARGE SCALE GENOMIC DNA]</scope>
    <source>
        <strain>Ly</strain>
    </source>
</reference>
<feature type="chain" id="PRO_1000121589" description="Large ribosomal subunit protein bL28">
    <location>
        <begin position="1"/>
        <end position="92"/>
    </location>
</feature>
<proteinExistence type="inferred from homology"/>